<evidence type="ECO:0000255" key="1">
    <source>
        <dbReference type="HAMAP-Rule" id="MF_00484"/>
    </source>
</evidence>
<evidence type="ECO:0000305" key="2"/>
<feature type="chain" id="PRO_0000230268" description="Glycogen synthase">
    <location>
        <begin position="1"/>
        <end position="437"/>
    </location>
</feature>
<feature type="binding site" evidence="1">
    <location>
        <position position="15"/>
    </location>
    <ligand>
        <name>ADP-alpha-D-glucose</name>
        <dbReference type="ChEBI" id="CHEBI:57498"/>
    </ligand>
</feature>
<protein>
    <recommendedName>
        <fullName evidence="1">Glycogen synthase</fullName>
        <ecNumber evidence="1">2.4.1.21</ecNumber>
    </recommendedName>
    <alternativeName>
        <fullName evidence="1">Starch [bacterial glycogen] synthase</fullName>
    </alternativeName>
</protein>
<organism>
    <name type="scientific">Thermus thermophilus (strain ATCC 27634 / DSM 579 / HB8)</name>
    <dbReference type="NCBI Taxonomy" id="300852"/>
    <lineage>
        <taxon>Bacteria</taxon>
        <taxon>Thermotogati</taxon>
        <taxon>Deinococcota</taxon>
        <taxon>Deinococci</taxon>
        <taxon>Thermales</taxon>
        <taxon>Thermaceae</taxon>
        <taxon>Thermus</taxon>
    </lineage>
</organism>
<accession>Q5SMC5</accession>
<proteinExistence type="inferred from homology"/>
<name>GLGA_THET8</name>
<keyword id="KW-0320">Glycogen biosynthesis</keyword>
<keyword id="KW-0328">Glycosyltransferase</keyword>
<keyword id="KW-1185">Reference proteome</keyword>
<keyword id="KW-0808">Transferase</keyword>
<gene>
    <name evidence="1" type="primary">glgA</name>
    <name type="ordered locus">TTHA0018</name>
</gene>
<reference key="1">
    <citation type="submission" date="2004-11" db="EMBL/GenBank/DDBJ databases">
        <title>Complete genome sequence of Thermus thermophilus HB8.</title>
        <authorList>
            <person name="Masui R."/>
            <person name="Kurokawa K."/>
            <person name="Nakagawa N."/>
            <person name="Tokunaga F."/>
            <person name="Koyama Y."/>
            <person name="Shibata T."/>
            <person name="Oshima T."/>
            <person name="Yokoyama S."/>
            <person name="Yasunaga T."/>
            <person name="Kuramitsu S."/>
        </authorList>
    </citation>
    <scope>NUCLEOTIDE SEQUENCE [LARGE SCALE GENOMIC DNA]</scope>
    <source>
        <strain>ATCC 27634 / DSM 579 / HB8</strain>
    </source>
</reference>
<dbReference type="EC" id="2.4.1.21" evidence="1"/>
<dbReference type="EMBL" id="AP008226">
    <property type="protein sequence ID" value="BAD69841.1"/>
    <property type="status" value="ALT_INIT"/>
    <property type="molecule type" value="Genomic_DNA"/>
</dbReference>
<dbReference type="RefSeq" id="YP_143284.1">
    <property type="nucleotide sequence ID" value="NC_006461.1"/>
</dbReference>
<dbReference type="SMR" id="Q5SMC5"/>
<dbReference type="CAZy" id="GT5">
    <property type="family name" value="Glycosyltransferase Family 5"/>
</dbReference>
<dbReference type="EnsemblBacteria" id="BAD69841">
    <property type="protein sequence ID" value="BAD69841"/>
    <property type="gene ID" value="BAD69841"/>
</dbReference>
<dbReference type="KEGG" id="ttj:TTHA0018"/>
<dbReference type="PATRIC" id="fig|300852.9.peg.19"/>
<dbReference type="eggNOG" id="COG0297">
    <property type="taxonomic scope" value="Bacteria"/>
</dbReference>
<dbReference type="HOGENOM" id="CLU_009583_18_5_0"/>
<dbReference type="UniPathway" id="UPA00164"/>
<dbReference type="Proteomes" id="UP000000532">
    <property type="component" value="Chromosome"/>
</dbReference>
<dbReference type="GO" id="GO:0009011">
    <property type="term" value="F:alpha-1,4-glucan glucosyltransferase (ADP-glucose donor) activity"/>
    <property type="evidence" value="ECO:0007669"/>
    <property type="project" value="UniProtKB-UniRule"/>
</dbReference>
<dbReference type="GO" id="GO:0004373">
    <property type="term" value="F:alpha-1,4-glucan glucosyltransferase (UDP-glucose donor) activity"/>
    <property type="evidence" value="ECO:0007669"/>
    <property type="project" value="InterPro"/>
</dbReference>
<dbReference type="GO" id="GO:0005978">
    <property type="term" value="P:glycogen biosynthetic process"/>
    <property type="evidence" value="ECO:0007669"/>
    <property type="project" value="UniProtKB-UniRule"/>
</dbReference>
<dbReference type="CDD" id="cd03791">
    <property type="entry name" value="GT5_Glycogen_synthase_DULL1-like"/>
    <property type="match status" value="1"/>
</dbReference>
<dbReference type="Gene3D" id="3.40.50.2000">
    <property type="entry name" value="Glycogen Phosphorylase B"/>
    <property type="match status" value="2"/>
</dbReference>
<dbReference type="HAMAP" id="MF_00484">
    <property type="entry name" value="Glycogen_synth"/>
    <property type="match status" value="1"/>
</dbReference>
<dbReference type="InterPro" id="IPR001296">
    <property type="entry name" value="Glyco_trans_1"/>
</dbReference>
<dbReference type="InterPro" id="IPR011835">
    <property type="entry name" value="GS/SS"/>
</dbReference>
<dbReference type="InterPro" id="IPR013534">
    <property type="entry name" value="Starch_synth_cat_dom"/>
</dbReference>
<dbReference type="NCBIfam" id="TIGR02095">
    <property type="entry name" value="glgA"/>
    <property type="match status" value="1"/>
</dbReference>
<dbReference type="PANTHER" id="PTHR45825:SF11">
    <property type="entry name" value="ALPHA AMYLASE DOMAIN-CONTAINING PROTEIN"/>
    <property type="match status" value="1"/>
</dbReference>
<dbReference type="PANTHER" id="PTHR45825">
    <property type="entry name" value="GRANULE-BOUND STARCH SYNTHASE 1, CHLOROPLASTIC/AMYLOPLASTIC"/>
    <property type="match status" value="1"/>
</dbReference>
<dbReference type="Pfam" id="PF08323">
    <property type="entry name" value="Glyco_transf_5"/>
    <property type="match status" value="1"/>
</dbReference>
<dbReference type="Pfam" id="PF00534">
    <property type="entry name" value="Glycos_transf_1"/>
    <property type="match status" value="1"/>
</dbReference>
<dbReference type="SUPFAM" id="SSF53756">
    <property type="entry name" value="UDP-Glycosyltransferase/glycogen phosphorylase"/>
    <property type="match status" value="1"/>
</dbReference>
<sequence>MRVLHVAPEAYPLAKVGGLADVVGALPKALRPLGVEAHVLLPWHGGLEARRVGEVAFAFFGREERAPLGERVEGGVRFLLLGVEGFGRERVYGYPDDAERYLRFALAAKEVARGYDLVHAHDWTAALLALYAPTVYTIHNLAHQGLVDPGLFFSWTGLPWSLFHMEALEFYGRVNLMKGGIVFARRVTTVSPSYAEEIQTPEFGMGLDGVLRRHAGKLRGILNGLDTEVFDPGKDPYLPAPYTREDPSGKARAKEAFRERTGLRPPVLAYVGRLDYQKGLDLVLKALPRLLEMGFRLYVQGVGDGGLQEAFLRAEEENPEGVRFLPAYDEAMARLAYAGAEAVLVPSRFEPCGLVQMIASRYGTPPVARAVGGLKDTVEDGRGGVLFETYHPEGLLYGVLRLFRLGAEEMGLRAMEKDFSWEGPARAYREVYREALG</sequence>
<comment type="function">
    <text evidence="1">Synthesizes alpha-1,4-glucan chains using ADP-glucose.</text>
</comment>
<comment type="catalytic activity">
    <reaction evidence="1">
        <text>[(1-&gt;4)-alpha-D-glucosyl](n) + ADP-alpha-D-glucose = [(1-&gt;4)-alpha-D-glucosyl](n+1) + ADP + H(+)</text>
        <dbReference type="Rhea" id="RHEA:18189"/>
        <dbReference type="Rhea" id="RHEA-COMP:9584"/>
        <dbReference type="Rhea" id="RHEA-COMP:9587"/>
        <dbReference type="ChEBI" id="CHEBI:15378"/>
        <dbReference type="ChEBI" id="CHEBI:15444"/>
        <dbReference type="ChEBI" id="CHEBI:57498"/>
        <dbReference type="ChEBI" id="CHEBI:456216"/>
        <dbReference type="EC" id="2.4.1.21"/>
    </reaction>
</comment>
<comment type="pathway">
    <text evidence="1">Glycan biosynthesis; glycogen biosynthesis.</text>
</comment>
<comment type="similarity">
    <text evidence="1">Belongs to the glycosyltransferase 1 family. Bacterial/plant glycogen synthase subfamily.</text>
</comment>
<comment type="sequence caution" evidence="2">
    <conflict type="erroneous initiation">
        <sequence resource="EMBL-CDS" id="BAD69841"/>
    </conflict>
</comment>